<accession>Q91ZZ3</accession>
<evidence type="ECO:0000250" key="1"/>
<evidence type="ECO:0000250" key="2">
    <source>
        <dbReference type="UniProtKB" id="Q16143"/>
    </source>
</evidence>
<evidence type="ECO:0000256" key="3">
    <source>
        <dbReference type="SAM" id="MobiDB-lite"/>
    </source>
</evidence>
<evidence type="ECO:0000269" key="4">
    <source>
    </source>
</evidence>
<evidence type="ECO:0000269" key="5">
    <source>
    </source>
</evidence>
<evidence type="ECO:0000305" key="6"/>
<evidence type="ECO:0007744" key="7">
    <source>
    </source>
</evidence>
<dbReference type="EMBL" id="AF348164">
    <property type="protein sequence ID" value="AAK83238.1"/>
    <property type="molecule type" value="Genomic_DNA"/>
</dbReference>
<dbReference type="EMBL" id="AF348162">
    <property type="protein sequence ID" value="AAK83238.1"/>
    <property type="status" value="JOINED"/>
    <property type="molecule type" value="Genomic_DNA"/>
</dbReference>
<dbReference type="EMBL" id="AF348163">
    <property type="protein sequence ID" value="AAK83238.1"/>
    <property type="status" value="JOINED"/>
    <property type="molecule type" value="Genomic_DNA"/>
</dbReference>
<dbReference type="EMBL" id="BC019409">
    <property type="protein sequence ID" value="AAH19409.1"/>
    <property type="molecule type" value="mRNA"/>
</dbReference>
<dbReference type="CCDS" id="CCDS36670.1"/>
<dbReference type="RefSeq" id="NP_001349336.1">
    <property type="nucleotide sequence ID" value="NM_001362407.1"/>
</dbReference>
<dbReference type="RefSeq" id="NP_291088.1">
    <property type="nucleotide sequence ID" value="NM_033610.3"/>
</dbReference>
<dbReference type="RefSeq" id="XP_006517078.1">
    <property type="nucleotide sequence ID" value="XM_006517015.3"/>
</dbReference>
<dbReference type="RefSeq" id="XP_006517079.1">
    <property type="nucleotide sequence ID" value="XM_006517016.3"/>
</dbReference>
<dbReference type="RefSeq" id="XP_030102940.1">
    <property type="nucleotide sequence ID" value="XM_030247080.1"/>
</dbReference>
<dbReference type="BMRB" id="Q91ZZ3"/>
<dbReference type="BioGRID" id="222330">
    <property type="interactions" value="17"/>
</dbReference>
<dbReference type="FunCoup" id="Q91ZZ3">
    <property type="interactions" value="115"/>
</dbReference>
<dbReference type="STRING" id="10090.ENSMUSP00000043074"/>
<dbReference type="GlyGen" id="Q91ZZ3">
    <property type="glycosylation" value="4 sites, 1 O-linked glycan (4 sites)"/>
</dbReference>
<dbReference type="iPTMnet" id="Q91ZZ3"/>
<dbReference type="PhosphoSitePlus" id="Q91ZZ3"/>
<dbReference type="SwissPalm" id="Q91ZZ3"/>
<dbReference type="PaxDb" id="10090-ENSMUSP00000043074"/>
<dbReference type="PeptideAtlas" id="Q91ZZ3"/>
<dbReference type="ProteomicsDB" id="254759"/>
<dbReference type="Antibodypedia" id="3634">
    <property type="antibodies" value="381 antibodies from 40 providers"/>
</dbReference>
<dbReference type="DNASU" id="104069"/>
<dbReference type="Ensembl" id="ENSMUST00000036825.14">
    <property type="protein sequence ID" value="ENSMUSP00000043074.8"/>
    <property type="gene ID" value="ENSMUSG00000034891.14"/>
</dbReference>
<dbReference type="Ensembl" id="ENSMUST00000134110.2">
    <property type="protein sequence ID" value="ENSMUSP00000116296.2"/>
    <property type="gene ID" value="ENSMUSG00000034891.14"/>
</dbReference>
<dbReference type="GeneID" id="104069"/>
<dbReference type="KEGG" id="mmu:104069"/>
<dbReference type="UCSC" id="uc007qpc.1">
    <property type="organism name" value="mouse"/>
</dbReference>
<dbReference type="AGR" id="MGI:1889011"/>
<dbReference type="CTD" id="6620"/>
<dbReference type="MGI" id="MGI:1889011">
    <property type="gene designation" value="Sncb"/>
</dbReference>
<dbReference type="VEuPathDB" id="HostDB:ENSMUSG00000034891"/>
<dbReference type="eggNOG" id="ENOG502S0N5">
    <property type="taxonomic scope" value="Eukaryota"/>
</dbReference>
<dbReference type="GeneTree" id="ENSGT00950000183175"/>
<dbReference type="HOGENOM" id="CLU_129378_1_0_1"/>
<dbReference type="InParanoid" id="Q91ZZ3"/>
<dbReference type="OMA" id="GWRERWM"/>
<dbReference type="OrthoDB" id="9944634at2759"/>
<dbReference type="PhylomeDB" id="Q91ZZ3"/>
<dbReference type="TreeFam" id="TF332776"/>
<dbReference type="BioGRID-ORCS" id="104069">
    <property type="hits" value="0 hits in 79 CRISPR screens"/>
</dbReference>
<dbReference type="ChiTaRS" id="Sncb">
    <property type="organism name" value="mouse"/>
</dbReference>
<dbReference type="PRO" id="PR:Q91ZZ3"/>
<dbReference type="Proteomes" id="UP000000589">
    <property type="component" value="Chromosome 13"/>
</dbReference>
<dbReference type="RNAct" id="Q91ZZ3">
    <property type="molecule type" value="protein"/>
</dbReference>
<dbReference type="Bgee" id="ENSMUSG00000034891">
    <property type="expression patterns" value="Expressed in dentate gyrus of hippocampal formation granule cell and 102 other cell types or tissues"/>
</dbReference>
<dbReference type="GO" id="GO:0016234">
    <property type="term" value="C:inclusion body"/>
    <property type="evidence" value="ECO:0007669"/>
    <property type="project" value="Ensembl"/>
</dbReference>
<dbReference type="GO" id="GO:0005739">
    <property type="term" value="C:mitochondrion"/>
    <property type="evidence" value="ECO:0007005"/>
    <property type="project" value="MGI"/>
</dbReference>
<dbReference type="GO" id="GO:0098793">
    <property type="term" value="C:presynapse"/>
    <property type="evidence" value="ECO:0007669"/>
    <property type="project" value="GOC"/>
</dbReference>
<dbReference type="GO" id="GO:0045202">
    <property type="term" value="C:synapse"/>
    <property type="evidence" value="ECO:0000314"/>
    <property type="project" value="MGI"/>
</dbReference>
<dbReference type="GO" id="GO:0005509">
    <property type="term" value="F:calcium ion binding"/>
    <property type="evidence" value="ECO:0007669"/>
    <property type="project" value="Ensembl"/>
</dbReference>
<dbReference type="GO" id="GO:1903136">
    <property type="term" value="F:cuprous ion binding"/>
    <property type="evidence" value="ECO:0007669"/>
    <property type="project" value="Ensembl"/>
</dbReference>
<dbReference type="GO" id="GO:0007268">
    <property type="term" value="P:chemical synaptic transmission"/>
    <property type="evidence" value="ECO:0000316"/>
    <property type="project" value="MGI"/>
</dbReference>
<dbReference type="GO" id="GO:0042417">
    <property type="term" value="P:dopamine metabolic process"/>
    <property type="evidence" value="ECO:0000316"/>
    <property type="project" value="MGI"/>
</dbReference>
<dbReference type="GO" id="GO:0043524">
    <property type="term" value="P:negative regulation of neuron apoptotic process"/>
    <property type="evidence" value="ECO:0000316"/>
    <property type="project" value="MGI"/>
</dbReference>
<dbReference type="GO" id="GO:0051402">
    <property type="term" value="P:neuron apoptotic process"/>
    <property type="evidence" value="ECO:0000316"/>
    <property type="project" value="MGI"/>
</dbReference>
<dbReference type="GO" id="GO:0050808">
    <property type="term" value="P:synapse organization"/>
    <property type="evidence" value="ECO:0000316"/>
    <property type="project" value="MGI"/>
</dbReference>
<dbReference type="GO" id="GO:0048488">
    <property type="term" value="P:synaptic vesicle endocytosis"/>
    <property type="evidence" value="ECO:0000314"/>
    <property type="project" value="SynGO"/>
</dbReference>
<dbReference type="FunFam" id="1.10.287.700:FF:000001">
    <property type="entry name" value="Alpha-synuclein"/>
    <property type="match status" value="1"/>
</dbReference>
<dbReference type="Gene3D" id="1.10.287.700">
    <property type="entry name" value="Helix hairpin bin"/>
    <property type="match status" value="1"/>
</dbReference>
<dbReference type="InterPro" id="IPR001058">
    <property type="entry name" value="Synuclein"/>
</dbReference>
<dbReference type="InterPro" id="IPR002461">
    <property type="entry name" value="Synuclein_beta"/>
</dbReference>
<dbReference type="PANTHER" id="PTHR13820:SF4">
    <property type="entry name" value="BETA-SYNUCLEIN"/>
    <property type="match status" value="1"/>
</dbReference>
<dbReference type="PANTHER" id="PTHR13820">
    <property type="entry name" value="SYNUCLEIN"/>
    <property type="match status" value="1"/>
</dbReference>
<dbReference type="Pfam" id="PF01387">
    <property type="entry name" value="Synuclein"/>
    <property type="match status" value="1"/>
</dbReference>
<dbReference type="PRINTS" id="PR01213">
    <property type="entry name" value="BSYNUCLEIN"/>
</dbReference>
<dbReference type="PRINTS" id="PR01211">
    <property type="entry name" value="SYNUCLEIN"/>
</dbReference>
<dbReference type="SUPFAM" id="SSF118375">
    <property type="entry name" value="Synuclein"/>
    <property type="match status" value="1"/>
</dbReference>
<sequence length="133" mass="14052">MDVFMKGLSMAKEGVVAAAEKTKQGVTEAAEKTKEGVLYVGSKTSGVVQGVASVAEKTKEQASHLGGAVFSGAGNIAAATGLVKKEEFPTDLKPEEVAQEAAEEPLIEPLMEPEGESYEDSPQEEYQEYEPEA</sequence>
<reference key="1">
    <citation type="journal article" date="2001" name="Cytogenet. Cell Genet.">
        <title>Genomic organization, chromosome location, and expression analysis of mouse beta-synuclein, a candidate for involvement in neurodegeneration.</title>
        <authorList>
            <person name="Sopher B.L."/>
            <person name="Koszdin K.L."/>
            <person name="McClain M.E."/>
            <person name="Myrick S.B."/>
            <person name="Martinez R.A."/>
            <person name="Smith A.C."/>
            <person name="La Spada A.R."/>
        </authorList>
    </citation>
    <scope>NUCLEOTIDE SEQUENCE [GENOMIC DNA]</scope>
    <scope>TISSUE SPECIFICITY</scope>
</reference>
<reference key="2">
    <citation type="journal article" date="2004" name="Genome Res.">
        <title>The status, quality, and expansion of the NIH full-length cDNA project: the Mammalian Gene Collection (MGC).</title>
        <authorList>
            <consortium name="The MGC Project Team"/>
        </authorList>
    </citation>
    <scope>NUCLEOTIDE SEQUENCE [LARGE SCALE MRNA]</scope>
    <source>
        <tissue>Eye</tissue>
    </source>
</reference>
<reference key="3">
    <citation type="submission" date="2007-03" db="UniProtKB">
        <authorList>
            <person name="Lubec G."/>
            <person name="Klug S."/>
        </authorList>
    </citation>
    <scope>PROTEIN SEQUENCE OF 60-84</scope>
    <scope>IDENTIFICATION BY MASS SPECTROMETRY</scope>
    <source>
        <tissue>Hippocampus</tissue>
    </source>
</reference>
<reference key="4">
    <citation type="journal article" date="2010" name="Cell">
        <title>A tissue-specific atlas of mouse protein phosphorylation and expression.</title>
        <authorList>
            <person name="Huttlin E.L."/>
            <person name="Jedrychowski M.P."/>
            <person name="Elias J.E."/>
            <person name="Goswami T."/>
            <person name="Rad R."/>
            <person name="Beausoleil S.A."/>
            <person name="Villen J."/>
            <person name="Haas W."/>
            <person name="Sowa M.E."/>
            <person name="Gygi S.P."/>
        </authorList>
    </citation>
    <scope>PHOSPHORYLATION [LARGE SCALE ANALYSIS] AT SER-45</scope>
    <scope>IDENTIFICATION BY MASS SPECTROMETRY [LARGE SCALE ANALYSIS]</scope>
    <source>
        <tissue>Brain</tissue>
        <tissue>Testis</tissue>
    </source>
</reference>
<reference key="5">
    <citation type="journal article" date="2010" name="Science">
        <title>Alpha-synuclein promotes SNARE-complex assembly in vivo and in vitro.</title>
        <authorList>
            <person name="Burre J."/>
            <person name="Sharma M."/>
            <person name="Tsetsenis T."/>
            <person name="Buchman V."/>
            <person name="Etherton M.R."/>
            <person name="Suedhof T.C."/>
        </authorList>
    </citation>
    <scope>DISRUPTION PHENOTYPE</scope>
</reference>
<name>SYUB_MOUSE</name>
<protein>
    <recommendedName>
        <fullName>Beta-synuclein</fullName>
    </recommendedName>
</protein>
<keyword id="KW-0963">Cytoplasm</keyword>
<keyword id="KW-0903">Direct protein sequencing</keyword>
<keyword id="KW-0597">Phosphoprotein</keyword>
<keyword id="KW-1185">Reference proteome</keyword>
<keyword id="KW-0677">Repeat</keyword>
<gene>
    <name type="primary">Sncb</name>
</gene>
<feature type="chain" id="PRO_0000286176" description="Beta-synuclein">
    <location>
        <begin position="1"/>
        <end position="133"/>
    </location>
</feature>
<feature type="repeat" description="1">
    <location>
        <begin position="20"/>
        <end position="30"/>
    </location>
</feature>
<feature type="repeat" description="2">
    <location>
        <begin position="31"/>
        <end position="41"/>
    </location>
</feature>
<feature type="repeat" description="3; approximate">
    <location>
        <begin position="42"/>
        <end position="55"/>
    </location>
</feature>
<feature type="repeat" description="4">
    <location>
        <begin position="56"/>
        <end position="66"/>
    </location>
</feature>
<feature type="region of interest" description="4 X 11 AA tandem repeats of [EGS]-K-T-K-[EQ]-[GQ]-V-X(4)">
    <location>
        <begin position="20"/>
        <end position="66"/>
    </location>
</feature>
<feature type="region of interest" description="Disordered" evidence="3">
    <location>
        <begin position="96"/>
        <end position="133"/>
    </location>
</feature>
<feature type="compositionally biased region" description="Acidic residues" evidence="3">
    <location>
        <begin position="97"/>
        <end position="133"/>
    </location>
</feature>
<feature type="modified residue" description="Phosphoserine" evidence="7">
    <location>
        <position position="45"/>
    </location>
</feature>
<feature type="modified residue" description="Phosphoserine; by BARK1, CK2 and GRK5" evidence="2">
    <location>
        <position position="117"/>
    </location>
</feature>
<comment type="function">
    <text evidence="1">May be involved in neuronal plasticity.</text>
</comment>
<comment type="subcellular location">
    <subcellularLocation>
        <location evidence="1">Cytoplasm</location>
    </subcellularLocation>
</comment>
<comment type="tissue specificity">
    <text evidence="4">Highly expressed in the brain.</text>
</comment>
<comment type="PTM">
    <text evidence="1">Phosphorylated. Phosphorylation by G-protein coupled receptor kinases (GRK) is more efficient than phosphorylation by CK1, CK2 and CaM-kinase II (By similarity).</text>
</comment>
<comment type="disruption phenotype">
    <text evidence="5">Simultaneous knockout of SNCA, SNCB and SNCG exhibit an age-dependent decrease in SNARE-complex assembly. Thus, synucleins are required for maintaining normal SNARE-complex assembly during aging in mice.</text>
</comment>
<comment type="similarity">
    <text evidence="6">Belongs to the synuclein family.</text>
</comment>
<organism>
    <name type="scientific">Mus musculus</name>
    <name type="common">Mouse</name>
    <dbReference type="NCBI Taxonomy" id="10090"/>
    <lineage>
        <taxon>Eukaryota</taxon>
        <taxon>Metazoa</taxon>
        <taxon>Chordata</taxon>
        <taxon>Craniata</taxon>
        <taxon>Vertebrata</taxon>
        <taxon>Euteleostomi</taxon>
        <taxon>Mammalia</taxon>
        <taxon>Eutheria</taxon>
        <taxon>Euarchontoglires</taxon>
        <taxon>Glires</taxon>
        <taxon>Rodentia</taxon>
        <taxon>Myomorpha</taxon>
        <taxon>Muroidea</taxon>
        <taxon>Muridae</taxon>
        <taxon>Murinae</taxon>
        <taxon>Mus</taxon>
        <taxon>Mus</taxon>
    </lineage>
</organism>
<proteinExistence type="evidence at protein level"/>